<accession>P0C9W7</accession>
<sequence length="170" mass="19202">MFYPVVQVLIGIILVIILILGFYHMKHKPPKKKCKTDTDCKDKGHHCVRGTCTDKSCLEAAKQDIKDIKLDPTIRSCDYAPGFYRFNATTADLQSPFGKTRIDLGRVWTTWSKEDEYCQSLCLQRKGSIGWEFDELSLGGVGNCYCYTNSHPVLKNSNNTTVMGIARNVL</sequence>
<dbReference type="EMBL" id="AY261366">
    <property type="status" value="NOT_ANNOTATED_CDS"/>
    <property type="molecule type" value="Genomic_DNA"/>
</dbReference>
<dbReference type="SMR" id="P0C9W7"/>
<dbReference type="Proteomes" id="UP000000858">
    <property type="component" value="Segment"/>
</dbReference>
<dbReference type="GO" id="GO:0020002">
    <property type="term" value="C:host cell plasma membrane"/>
    <property type="evidence" value="ECO:0007669"/>
    <property type="project" value="UniProtKB-SubCell"/>
</dbReference>
<dbReference type="GO" id="GO:0016020">
    <property type="term" value="C:membrane"/>
    <property type="evidence" value="ECO:0007669"/>
    <property type="project" value="UniProtKB-KW"/>
</dbReference>
<dbReference type="GO" id="GO:0055036">
    <property type="term" value="C:virion membrane"/>
    <property type="evidence" value="ECO:0007669"/>
    <property type="project" value="UniProtKB-SubCell"/>
</dbReference>
<keyword id="KW-0244">Early protein</keyword>
<keyword id="KW-1032">Host cell membrane</keyword>
<keyword id="KW-1043">Host membrane</keyword>
<keyword id="KW-0472">Membrane</keyword>
<keyword id="KW-0812">Transmembrane</keyword>
<keyword id="KW-1133">Transmembrane helix</keyword>
<keyword id="KW-0946">Virion</keyword>
<name>EV166_ASFWA</name>
<organismHost>
    <name type="scientific">Ornithodoros</name>
    <name type="common">relapsing fever ticks</name>
    <dbReference type="NCBI Taxonomy" id="6937"/>
</organismHost>
<organismHost>
    <name type="scientific">Phacochoerus aethiopicus</name>
    <name type="common">Warthog</name>
    <dbReference type="NCBI Taxonomy" id="85517"/>
</organismHost>
<organismHost>
    <name type="scientific">Phacochoerus africanus</name>
    <name type="common">Warthog</name>
    <dbReference type="NCBI Taxonomy" id="41426"/>
</organismHost>
<organismHost>
    <name type="scientific">Potamochoerus larvatus</name>
    <name type="common">Bushpig</name>
    <dbReference type="NCBI Taxonomy" id="273792"/>
</organismHost>
<organismHost>
    <name type="scientific">Sus scrofa</name>
    <name type="common">Pig</name>
    <dbReference type="NCBI Taxonomy" id="9823"/>
</organismHost>
<comment type="subcellular location">
    <subcellularLocation>
        <location>Virion membrane</location>
        <topology>Single-pass membrane protein</topology>
    </subcellularLocation>
    <subcellularLocation>
        <location evidence="1">Host cell membrane</location>
        <topology evidence="1">Single-pass membrane protein</topology>
    </subcellularLocation>
</comment>
<comment type="induction">
    <text>Early structural protein.</text>
</comment>
<comment type="similarity">
    <text evidence="3">Belongs to the asfivirus envelope protein p22 family.</text>
</comment>
<feature type="chain" id="PRO_0000373371" description="Envelope protein 166">
    <location>
        <begin position="1"/>
        <end position="170"/>
    </location>
</feature>
<feature type="topological domain" description="Intravirion" evidence="2">
    <location>
        <position position="1"/>
    </location>
</feature>
<feature type="transmembrane region" description="Helical" evidence="2">
    <location>
        <begin position="2"/>
        <end position="22"/>
    </location>
</feature>
<feature type="topological domain" description="Virion surface" evidence="2">
    <location>
        <begin position="23"/>
        <end position="170"/>
    </location>
</feature>
<evidence type="ECO:0000250" key="1"/>
<evidence type="ECO:0000255" key="2"/>
<evidence type="ECO:0000305" key="3"/>
<gene>
    <name type="ordered locus">War-166</name>
</gene>
<organism>
    <name type="scientific">African swine fever virus (isolate Warthog/Namibia/Wart80/1980)</name>
    <name type="common">ASFV</name>
    <dbReference type="NCBI Taxonomy" id="561444"/>
    <lineage>
        <taxon>Viruses</taxon>
        <taxon>Varidnaviria</taxon>
        <taxon>Bamfordvirae</taxon>
        <taxon>Nucleocytoviricota</taxon>
        <taxon>Pokkesviricetes</taxon>
        <taxon>Asfuvirales</taxon>
        <taxon>Asfarviridae</taxon>
        <taxon>Asfivirus</taxon>
        <taxon>African swine fever virus</taxon>
    </lineage>
</organism>
<proteinExistence type="evidence at transcript level"/>
<protein>
    <recommendedName>
        <fullName>Envelope protein 166</fullName>
    </recommendedName>
</protein>
<reference key="1">
    <citation type="submission" date="2003-03" db="EMBL/GenBank/DDBJ databases">
        <title>African swine fever virus genomes.</title>
        <authorList>
            <person name="Kutish G.F."/>
            <person name="Rock D.L."/>
        </authorList>
    </citation>
    <scope>NUCLEOTIDE SEQUENCE [LARGE SCALE GENOMIC DNA]</scope>
</reference>